<gene>
    <name type="primary">xis</name>
    <name type="ordered locus">SAG0916</name>
</gene>
<accession>P61623</accession>
<accession>P27452</accession>
<protein>
    <recommendedName>
        <fullName>Excisionase from transposon Tn916</fullName>
    </recommendedName>
</protein>
<organism>
    <name type="scientific">Streptococcus agalactiae serotype V (strain ATCC BAA-611 / 2603 V/R)</name>
    <dbReference type="NCBI Taxonomy" id="208435"/>
    <lineage>
        <taxon>Bacteria</taxon>
        <taxon>Bacillati</taxon>
        <taxon>Bacillota</taxon>
        <taxon>Bacilli</taxon>
        <taxon>Lactobacillales</taxon>
        <taxon>Streptococcaceae</taxon>
        <taxon>Streptococcus</taxon>
    </lineage>
</organism>
<keyword id="KW-0229">DNA integration</keyword>
<keyword id="KW-0233">DNA recombination</keyword>
<keyword id="KW-1185">Reference proteome</keyword>
<keyword id="KW-0814">Transposable element</keyword>
<keyword id="KW-1250">Viral genome excision</keyword>
<sequence length="67" mass="8110">MKQTDIPIWERYTLTIEEASKYFRIGENKLRRLAEENKNANWLIMNGNRIQIKRKQFEKIIDTLDAI</sequence>
<dbReference type="EMBL" id="AE009948">
    <property type="protein sequence ID" value="AAM99802.1"/>
    <property type="molecule type" value="Genomic_DNA"/>
</dbReference>
<dbReference type="RefSeq" id="NP_687930.1">
    <property type="nucleotide sequence ID" value="NC_004116.1"/>
</dbReference>
<dbReference type="RefSeq" id="WP_000814511.1">
    <property type="nucleotide sequence ID" value="NC_004116.1"/>
</dbReference>
<dbReference type="BMRB" id="P61623"/>
<dbReference type="SMR" id="P61623"/>
<dbReference type="STRING" id="208435.SAG0916"/>
<dbReference type="KEGG" id="sag:SAG0916"/>
<dbReference type="PATRIC" id="fig|208435.3.peg.921"/>
<dbReference type="HOGENOM" id="CLU_170320_0_0_9"/>
<dbReference type="OrthoDB" id="1913083at2"/>
<dbReference type="PRO" id="PR:P61623"/>
<dbReference type="Proteomes" id="UP000000821">
    <property type="component" value="Chromosome"/>
</dbReference>
<dbReference type="GO" id="GO:0015074">
    <property type="term" value="P:DNA integration"/>
    <property type="evidence" value="ECO:0007669"/>
    <property type="project" value="UniProtKB-KW"/>
</dbReference>
<dbReference type="GO" id="GO:0006310">
    <property type="term" value="P:DNA recombination"/>
    <property type="evidence" value="ECO:0007669"/>
    <property type="project" value="UniProtKB-KW"/>
</dbReference>
<dbReference type="GO" id="GO:0032359">
    <property type="term" value="P:provirus excision"/>
    <property type="evidence" value="ECO:0007669"/>
    <property type="project" value="UniProtKB-KW"/>
</dbReference>
<dbReference type="Gene3D" id="3.90.105.50">
    <property type="match status" value="1"/>
</dbReference>
<dbReference type="InterPro" id="IPR038148">
    <property type="entry name" value="Tn1545/Tn916_Xis"/>
</dbReference>
<dbReference type="InterPro" id="IPR015122">
    <property type="entry name" value="Tn916-Xis"/>
</dbReference>
<dbReference type="Pfam" id="PF09035">
    <property type="entry name" value="Tn916-Xis"/>
    <property type="match status" value="1"/>
</dbReference>
<dbReference type="PIRSF" id="PIRSF004323">
    <property type="entry name" value="Tn916-Xis"/>
    <property type="match status" value="1"/>
</dbReference>
<proteinExistence type="predicted"/>
<feature type="chain" id="PRO_0000066013" description="Excisionase from transposon Tn916">
    <location>
        <begin position="1"/>
        <end position="67"/>
    </location>
</feature>
<name>XIS_STRA5</name>
<reference key="1">
    <citation type="journal article" date="2002" name="Proc. Natl. Acad. Sci. U.S.A.">
        <title>Complete genome sequence and comparative genomic analysis of an emerging human pathogen, serotype V Streptococcus agalactiae.</title>
        <authorList>
            <person name="Tettelin H."/>
            <person name="Masignani V."/>
            <person name="Cieslewicz M.J."/>
            <person name="Eisen J.A."/>
            <person name="Peterson S.N."/>
            <person name="Wessels M.R."/>
            <person name="Paulsen I.T."/>
            <person name="Nelson K.E."/>
            <person name="Margarit I."/>
            <person name="Read T.D."/>
            <person name="Madoff L.C."/>
            <person name="Wolf A.M."/>
            <person name="Beanan M.J."/>
            <person name="Brinkac L.M."/>
            <person name="Daugherty S.C."/>
            <person name="DeBoy R.T."/>
            <person name="Durkin A.S."/>
            <person name="Kolonay J.F."/>
            <person name="Madupu R."/>
            <person name="Lewis M.R."/>
            <person name="Radune D."/>
            <person name="Fedorova N.B."/>
            <person name="Scanlan D."/>
            <person name="Khouri H.M."/>
            <person name="Mulligan S."/>
            <person name="Carty H.A."/>
            <person name="Cline R.T."/>
            <person name="Van Aken S.E."/>
            <person name="Gill J."/>
            <person name="Scarselli M."/>
            <person name="Mora M."/>
            <person name="Iacobini E.T."/>
            <person name="Brettoni C."/>
            <person name="Galli G."/>
            <person name="Mariani M."/>
            <person name="Vegni F."/>
            <person name="Maione D."/>
            <person name="Rinaudo D."/>
            <person name="Rappuoli R."/>
            <person name="Telford J.L."/>
            <person name="Kasper D.L."/>
            <person name="Grandi G."/>
            <person name="Fraser C.M."/>
        </authorList>
    </citation>
    <scope>NUCLEOTIDE SEQUENCE [LARGE SCALE GENOMIC DNA]</scope>
    <source>
        <strain>ATCC BAA-611 / 2603 V/R</strain>
    </source>
</reference>